<dbReference type="EMBL" id="U69755">
    <property type="protein sequence ID" value="AAC01798.1"/>
    <property type="molecule type" value="Genomic_DNA"/>
</dbReference>
<dbReference type="SMR" id="O48027"/>
<dbReference type="GO" id="GO:0005743">
    <property type="term" value="C:mitochondrial inner membrane"/>
    <property type="evidence" value="ECO:0007669"/>
    <property type="project" value="UniProtKB-SubCell"/>
</dbReference>
<dbReference type="GO" id="GO:0045275">
    <property type="term" value="C:respiratory chain complex III"/>
    <property type="evidence" value="ECO:0007669"/>
    <property type="project" value="InterPro"/>
</dbReference>
<dbReference type="GO" id="GO:0046872">
    <property type="term" value="F:metal ion binding"/>
    <property type="evidence" value="ECO:0007669"/>
    <property type="project" value="UniProtKB-KW"/>
</dbReference>
<dbReference type="GO" id="GO:0008121">
    <property type="term" value="F:ubiquinol-cytochrome-c reductase activity"/>
    <property type="evidence" value="ECO:0007669"/>
    <property type="project" value="InterPro"/>
</dbReference>
<dbReference type="GO" id="GO:0006122">
    <property type="term" value="P:mitochondrial electron transport, ubiquinol to cytochrome c"/>
    <property type="evidence" value="ECO:0007669"/>
    <property type="project" value="TreeGrafter"/>
</dbReference>
<dbReference type="CDD" id="cd00290">
    <property type="entry name" value="cytochrome_b_C"/>
    <property type="match status" value="1"/>
</dbReference>
<dbReference type="CDD" id="cd00284">
    <property type="entry name" value="Cytochrome_b_N"/>
    <property type="match status" value="1"/>
</dbReference>
<dbReference type="Gene3D" id="1.20.810.10">
    <property type="entry name" value="Cytochrome Bc1 Complex, Chain C"/>
    <property type="match status" value="1"/>
</dbReference>
<dbReference type="InterPro" id="IPR005798">
    <property type="entry name" value="Cyt_b/b6_C"/>
</dbReference>
<dbReference type="InterPro" id="IPR036150">
    <property type="entry name" value="Cyt_b/b6_C_sf"/>
</dbReference>
<dbReference type="InterPro" id="IPR005797">
    <property type="entry name" value="Cyt_b/b6_N"/>
</dbReference>
<dbReference type="InterPro" id="IPR027387">
    <property type="entry name" value="Cytb/b6-like_sf"/>
</dbReference>
<dbReference type="InterPro" id="IPR030689">
    <property type="entry name" value="Cytochrome_b"/>
</dbReference>
<dbReference type="InterPro" id="IPR048260">
    <property type="entry name" value="Cytochrome_b_C_euk/bac"/>
</dbReference>
<dbReference type="InterPro" id="IPR048259">
    <property type="entry name" value="Cytochrome_b_N_euk/bac"/>
</dbReference>
<dbReference type="InterPro" id="IPR016174">
    <property type="entry name" value="Di-haem_cyt_TM"/>
</dbReference>
<dbReference type="PANTHER" id="PTHR19271">
    <property type="entry name" value="CYTOCHROME B"/>
    <property type="match status" value="1"/>
</dbReference>
<dbReference type="PANTHER" id="PTHR19271:SF16">
    <property type="entry name" value="CYTOCHROME B"/>
    <property type="match status" value="1"/>
</dbReference>
<dbReference type="Pfam" id="PF00032">
    <property type="entry name" value="Cytochrom_B_C"/>
    <property type="match status" value="1"/>
</dbReference>
<dbReference type="Pfam" id="PF00033">
    <property type="entry name" value="Cytochrome_B"/>
    <property type="match status" value="1"/>
</dbReference>
<dbReference type="PIRSF" id="PIRSF038885">
    <property type="entry name" value="COB"/>
    <property type="match status" value="1"/>
</dbReference>
<dbReference type="SUPFAM" id="SSF81648">
    <property type="entry name" value="a domain/subunit of cytochrome bc1 complex (Ubiquinol-cytochrome c reductase)"/>
    <property type="match status" value="1"/>
</dbReference>
<dbReference type="SUPFAM" id="SSF81342">
    <property type="entry name" value="Transmembrane di-heme cytochromes"/>
    <property type="match status" value="1"/>
</dbReference>
<dbReference type="PROSITE" id="PS51003">
    <property type="entry name" value="CYTB_CTER"/>
    <property type="match status" value="1"/>
</dbReference>
<dbReference type="PROSITE" id="PS51002">
    <property type="entry name" value="CYTB_NTER"/>
    <property type="match status" value="1"/>
</dbReference>
<proteinExistence type="inferred from homology"/>
<sequence>MPHHYILTMFGLLPVATNISTWWNFGSMLLSCLMLQVTTGFFLAVHYTANTNLAFSSIIHIMRDVPYGWMMQNTHAIGASLFFICIYIHIARGLYYGSYLNKKTWMSGTTLLITLMATAFFGYILPWGQMSFWAATVITNLLTAVPYLGTSLTIWLWGGFAINDPTLTRFFALHFILPFIIISLSSLHILLLHEEGSSNPLGTNSDTDKIPFHPYHTYKDLLLLTLLLTLLLLTTFFLPNIMNDPENFSKANPLVTPQHIKPEWYFLFAYGILRSIPNKLGGALALVASILIIMTMPFTHTAHVRSMTFRPMSQLMFWTLISTFMTITWAATKPVEPPFMMISQTASMIYFMFFISNPILGWMENKIMKTM</sequence>
<accession>O48027</accession>
<gene>
    <name type="primary">MT-CYB</name>
    <name type="synonym">COB</name>
    <name type="synonym">CYTB</name>
    <name type="synonym">MTCYB</name>
</gene>
<organism>
    <name type="scientific">Casarea dussumieri</name>
    <name type="common">Round Island keel-scaled boa</name>
    <dbReference type="NCBI Taxonomy" id="51857"/>
    <lineage>
        <taxon>Eukaryota</taxon>
        <taxon>Metazoa</taxon>
        <taxon>Chordata</taxon>
        <taxon>Craniata</taxon>
        <taxon>Vertebrata</taxon>
        <taxon>Euteleostomi</taxon>
        <taxon>Lepidosauria</taxon>
        <taxon>Squamata</taxon>
        <taxon>Bifurcata</taxon>
        <taxon>Unidentata</taxon>
        <taxon>Episquamata</taxon>
        <taxon>Toxicofera</taxon>
        <taxon>Serpentes</taxon>
        <taxon>Henophidia</taxon>
        <taxon>Bolyeridae</taxon>
        <taxon>Casarea</taxon>
    </lineage>
</organism>
<protein>
    <recommendedName>
        <fullName>Cytochrome b</fullName>
    </recommendedName>
    <alternativeName>
        <fullName>Complex III subunit 3</fullName>
    </alternativeName>
    <alternativeName>
        <fullName>Complex III subunit III</fullName>
    </alternativeName>
    <alternativeName>
        <fullName>Cytochrome b-c1 complex subunit 3</fullName>
    </alternativeName>
    <alternativeName>
        <fullName>Ubiquinol-cytochrome-c reductase complex cytochrome b subunit</fullName>
    </alternativeName>
</protein>
<keyword id="KW-0249">Electron transport</keyword>
<keyword id="KW-0349">Heme</keyword>
<keyword id="KW-0408">Iron</keyword>
<keyword id="KW-0472">Membrane</keyword>
<keyword id="KW-0479">Metal-binding</keyword>
<keyword id="KW-0496">Mitochondrion</keyword>
<keyword id="KW-0999">Mitochondrion inner membrane</keyword>
<keyword id="KW-0679">Respiratory chain</keyword>
<keyword id="KW-0812">Transmembrane</keyword>
<keyword id="KW-1133">Transmembrane helix</keyword>
<keyword id="KW-0813">Transport</keyword>
<keyword id="KW-0830">Ubiquinone</keyword>
<feature type="chain" id="PRO_0000060740" description="Cytochrome b">
    <location>
        <begin position="1"/>
        <end position="371"/>
    </location>
</feature>
<feature type="transmembrane region" description="Helical" evidence="2">
    <location>
        <begin position="25"/>
        <end position="45"/>
    </location>
</feature>
<feature type="transmembrane region" description="Helical" evidence="2">
    <location>
        <begin position="69"/>
        <end position="90"/>
    </location>
</feature>
<feature type="transmembrane region" description="Helical" evidence="2">
    <location>
        <begin position="105"/>
        <end position="125"/>
    </location>
</feature>
<feature type="transmembrane region" description="Helical" evidence="2">
    <location>
        <begin position="170"/>
        <end position="190"/>
    </location>
</feature>
<feature type="transmembrane region" description="Helical" evidence="2">
    <location>
        <begin position="218"/>
        <end position="238"/>
    </location>
</feature>
<feature type="transmembrane region" description="Helical" evidence="2">
    <location>
        <begin position="280"/>
        <end position="300"/>
    </location>
</feature>
<feature type="transmembrane region" description="Helical" evidence="2">
    <location>
        <begin position="312"/>
        <end position="332"/>
    </location>
</feature>
<feature type="transmembrane region" description="Helical" evidence="2">
    <location>
        <begin position="339"/>
        <end position="358"/>
    </location>
</feature>
<feature type="binding site" description="axial binding residue" evidence="2">
    <location>
        <position position="75"/>
    </location>
    <ligand>
        <name>heme b</name>
        <dbReference type="ChEBI" id="CHEBI:60344"/>
        <label>b562</label>
    </ligand>
    <ligandPart>
        <name>Fe</name>
        <dbReference type="ChEBI" id="CHEBI:18248"/>
    </ligandPart>
</feature>
<feature type="binding site" description="axial binding residue" evidence="2">
    <location>
        <position position="89"/>
    </location>
    <ligand>
        <name>heme b</name>
        <dbReference type="ChEBI" id="CHEBI:60344"/>
        <label>b566</label>
    </ligand>
    <ligandPart>
        <name>Fe</name>
        <dbReference type="ChEBI" id="CHEBI:18248"/>
    </ligandPart>
</feature>
<feature type="binding site" description="axial binding residue" evidence="2">
    <location>
        <position position="174"/>
    </location>
    <ligand>
        <name>heme b</name>
        <dbReference type="ChEBI" id="CHEBI:60344"/>
        <label>b562</label>
    </ligand>
    <ligandPart>
        <name>Fe</name>
        <dbReference type="ChEBI" id="CHEBI:18248"/>
    </ligandPart>
</feature>
<feature type="binding site" description="axial binding residue" evidence="2">
    <location>
        <position position="188"/>
    </location>
    <ligand>
        <name>heme b</name>
        <dbReference type="ChEBI" id="CHEBI:60344"/>
        <label>b566</label>
    </ligand>
    <ligandPart>
        <name>Fe</name>
        <dbReference type="ChEBI" id="CHEBI:18248"/>
    </ligandPart>
</feature>
<feature type="binding site" evidence="2">
    <location>
        <position position="193"/>
    </location>
    <ligand>
        <name>a ubiquinone</name>
        <dbReference type="ChEBI" id="CHEBI:16389"/>
    </ligand>
</feature>
<comment type="function">
    <text evidence="2">Component of the ubiquinol-cytochrome c reductase complex (complex III or cytochrome b-c1 complex) that is part of the mitochondrial respiratory chain. The b-c1 complex mediates electron transfer from ubiquinol to cytochrome c. Contributes to the generation of a proton gradient across the mitochondrial membrane that is then used for ATP synthesis.</text>
</comment>
<comment type="cofactor">
    <cofactor evidence="2">
        <name>heme b</name>
        <dbReference type="ChEBI" id="CHEBI:60344"/>
    </cofactor>
    <text evidence="2">Binds 2 heme b groups non-covalently.</text>
</comment>
<comment type="subunit">
    <text evidence="2">The cytochrome bc1 complex contains 3 respiratory subunits (MT-CYB, CYC1 and UQCRFS1), 2 core proteins (UQCRC1 and UQCRC2) and probably 6 low-molecular weight proteins.</text>
</comment>
<comment type="subcellular location">
    <subcellularLocation>
        <location evidence="2">Mitochondrion inner membrane</location>
        <topology evidence="2">Multi-pass membrane protein</topology>
    </subcellularLocation>
</comment>
<comment type="miscellaneous">
    <text evidence="1">Heme 1 (or BL or b562) is low-potential and absorbs at about 562 nm, and heme 2 (or BH or b566) is high-potential and absorbs at about 566 nm.</text>
</comment>
<comment type="similarity">
    <text evidence="3 4">Belongs to the cytochrome b family.</text>
</comment>
<comment type="caution">
    <text evidence="2">The full-length protein contains only eight transmembrane helices, not nine as predicted by bioinformatics tools.</text>
</comment>
<geneLocation type="mitochondrion"/>
<name>CYB_CASDU</name>
<evidence type="ECO:0000250" key="1"/>
<evidence type="ECO:0000250" key="2">
    <source>
        <dbReference type="UniProtKB" id="P00157"/>
    </source>
</evidence>
<evidence type="ECO:0000255" key="3">
    <source>
        <dbReference type="PROSITE-ProRule" id="PRU00967"/>
    </source>
</evidence>
<evidence type="ECO:0000255" key="4">
    <source>
        <dbReference type="PROSITE-ProRule" id="PRU00968"/>
    </source>
</evidence>
<reference key="1">
    <citation type="thesis" date="1997" institute="Queen's University / Kingston" country="Canada">
        <title>Hic Sunt Serpentes -- molecular phylogenetics and the Boidae (Serpentes: Booidea).</title>
        <authorList>
            <person name="Campbell B.N."/>
        </authorList>
    </citation>
    <scope>NUCLEOTIDE SEQUENCE [GENOMIC DNA]</scope>
</reference>